<sequence>MVQCLVVDDDPRILNYIASHLQTEHIDAYTQPSGEAALKLLEKQRVDIAVVDIMMDGMDGFQLCNTLKNDYDIPVIMLTARDALSDKERAFISGTDDYVTKPFEVKELIFRIRAVLRRYNINSNSEMTIGNLTLNQSYLELQVSNKTMTLPNKEFQLLFMLAARPKQIFTREQIIEKIWGYDYEGDERTVDVHIKRLRQRLKKLNATLTIETVRGQGYKVENHV</sequence>
<protein>
    <recommendedName>
        <fullName>Heme response regulator HssR</fullName>
    </recommendedName>
</protein>
<proteinExistence type="inferred from homology"/>
<evidence type="ECO:0000250" key="1"/>
<evidence type="ECO:0000255" key="2">
    <source>
        <dbReference type="PROSITE-ProRule" id="PRU00169"/>
    </source>
</evidence>
<evidence type="ECO:0000255" key="3">
    <source>
        <dbReference type="PROSITE-ProRule" id="PRU01091"/>
    </source>
</evidence>
<evidence type="ECO:0000305" key="4"/>
<keyword id="KW-0010">Activator</keyword>
<keyword id="KW-0963">Cytoplasm</keyword>
<keyword id="KW-0238">DNA-binding</keyword>
<keyword id="KW-0597">Phosphoprotein</keyword>
<keyword id="KW-0804">Transcription</keyword>
<keyword id="KW-0805">Transcription regulation</keyword>
<keyword id="KW-0902">Two-component regulatory system</keyword>
<keyword id="KW-0843">Virulence</keyword>
<accession>Q7A3X1</accession>
<dbReference type="EMBL" id="BA000018">
    <property type="protein sequence ID" value="BAB43453.1"/>
    <property type="molecule type" value="Genomic_DNA"/>
</dbReference>
<dbReference type="PIR" id="D90036">
    <property type="entry name" value="D90036"/>
</dbReference>
<dbReference type="RefSeq" id="WP_000249497.1">
    <property type="nucleotide sequence ID" value="NC_002745.2"/>
</dbReference>
<dbReference type="SMR" id="Q7A3X1"/>
<dbReference type="EnsemblBacteria" id="BAB43453">
    <property type="protein sequence ID" value="BAB43453"/>
    <property type="gene ID" value="BAB43453"/>
</dbReference>
<dbReference type="KEGG" id="sau:SA2151"/>
<dbReference type="HOGENOM" id="CLU_000445_30_3_9"/>
<dbReference type="GO" id="GO:0005829">
    <property type="term" value="C:cytosol"/>
    <property type="evidence" value="ECO:0007669"/>
    <property type="project" value="TreeGrafter"/>
</dbReference>
<dbReference type="GO" id="GO:0032993">
    <property type="term" value="C:protein-DNA complex"/>
    <property type="evidence" value="ECO:0007669"/>
    <property type="project" value="TreeGrafter"/>
</dbReference>
<dbReference type="GO" id="GO:0000156">
    <property type="term" value="F:phosphorelay response regulator activity"/>
    <property type="evidence" value="ECO:0007669"/>
    <property type="project" value="TreeGrafter"/>
</dbReference>
<dbReference type="GO" id="GO:0000976">
    <property type="term" value="F:transcription cis-regulatory region binding"/>
    <property type="evidence" value="ECO:0007669"/>
    <property type="project" value="TreeGrafter"/>
</dbReference>
<dbReference type="GO" id="GO:0006355">
    <property type="term" value="P:regulation of DNA-templated transcription"/>
    <property type="evidence" value="ECO:0007669"/>
    <property type="project" value="InterPro"/>
</dbReference>
<dbReference type="CDD" id="cd17574">
    <property type="entry name" value="REC_OmpR"/>
    <property type="match status" value="1"/>
</dbReference>
<dbReference type="CDD" id="cd00383">
    <property type="entry name" value="trans_reg_C"/>
    <property type="match status" value="1"/>
</dbReference>
<dbReference type="FunFam" id="1.10.10.10:FF:000018">
    <property type="entry name" value="DNA-binding response regulator ResD"/>
    <property type="match status" value="1"/>
</dbReference>
<dbReference type="Gene3D" id="3.40.50.2300">
    <property type="match status" value="1"/>
</dbReference>
<dbReference type="Gene3D" id="6.10.250.690">
    <property type="match status" value="1"/>
</dbReference>
<dbReference type="Gene3D" id="1.10.10.10">
    <property type="entry name" value="Winged helix-like DNA-binding domain superfamily/Winged helix DNA-binding domain"/>
    <property type="match status" value="1"/>
</dbReference>
<dbReference type="InterPro" id="IPR011006">
    <property type="entry name" value="CheY-like_superfamily"/>
</dbReference>
<dbReference type="InterPro" id="IPR001867">
    <property type="entry name" value="OmpR/PhoB-type_DNA-bd"/>
</dbReference>
<dbReference type="InterPro" id="IPR001789">
    <property type="entry name" value="Sig_transdc_resp-reg_receiver"/>
</dbReference>
<dbReference type="InterPro" id="IPR039420">
    <property type="entry name" value="WalR-like"/>
</dbReference>
<dbReference type="InterPro" id="IPR036388">
    <property type="entry name" value="WH-like_DNA-bd_sf"/>
</dbReference>
<dbReference type="PANTHER" id="PTHR48111:SF49">
    <property type="entry name" value="HEME RESPONSE REGULATOR HSSR"/>
    <property type="match status" value="1"/>
</dbReference>
<dbReference type="PANTHER" id="PTHR48111">
    <property type="entry name" value="REGULATOR OF RPOS"/>
    <property type="match status" value="1"/>
</dbReference>
<dbReference type="Pfam" id="PF00072">
    <property type="entry name" value="Response_reg"/>
    <property type="match status" value="1"/>
</dbReference>
<dbReference type="Pfam" id="PF00486">
    <property type="entry name" value="Trans_reg_C"/>
    <property type="match status" value="1"/>
</dbReference>
<dbReference type="SMART" id="SM00448">
    <property type="entry name" value="REC"/>
    <property type="match status" value="1"/>
</dbReference>
<dbReference type="SMART" id="SM00862">
    <property type="entry name" value="Trans_reg_C"/>
    <property type="match status" value="1"/>
</dbReference>
<dbReference type="SUPFAM" id="SSF52172">
    <property type="entry name" value="CheY-like"/>
    <property type="match status" value="1"/>
</dbReference>
<dbReference type="PROSITE" id="PS51755">
    <property type="entry name" value="OMPR_PHOB"/>
    <property type="match status" value="1"/>
</dbReference>
<dbReference type="PROSITE" id="PS50110">
    <property type="entry name" value="RESPONSE_REGULATORY"/>
    <property type="match status" value="1"/>
</dbReference>
<feature type="chain" id="PRO_0000331328" description="Heme response regulator HssR">
    <location>
        <begin position="1"/>
        <end position="224"/>
    </location>
</feature>
<feature type="domain" description="Response regulatory" evidence="2">
    <location>
        <begin position="3"/>
        <end position="116"/>
    </location>
</feature>
<feature type="DNA-binding region" description="OmpR/PhoB-type" evidence="3">
    <location>
        <begin position="124"/>
        <end position="222"/>
    </location>
</feature>
<feature type="modified residue" description="4-aspartylphosphate" evidence="2">
    <location>
        <position position="52"/>
    </location>
</feature>
<comment type="function">
    <text evidence="1">Member of the two-component regulatory system HssS/HssR involved in intracellular heme homeostasis and tempering of staphylococcal virulence. Phosphorylated HssR binds to a direct repeat sequence within hrtAB promoter and activates the expression of hrtAB, an efflux pump, in response to extracellular heme, hemin, hemoglobin or blood (By similarity).</text>
</comment>
<comment type="subcellular location">
    <subcellularLocation>
        <location evidence="4">Cytoplasm</location>
    </subcellularLocation>
</comment>
<comment type="PTM">
    <text evidence="1">Phosphorylated by HssS.</text>
</comment>
<gene>
    <name type="primary">hssR</name>
    <name type="ordered locus">SA2151</name>
</gene>
<name>HSSR_STAAN</name>
<organism>
    <name type="scientific">Staphylococcus aureus (strain N315)</name>
    <dbReference type="NCBI Taxonomy" id="158879"/>
    <lineage>
        <taxon>Bacteria</taxon>
        <taxon>Bacillati</taxon>
        <taxon>Bacillota</taxon>
        <taxon>Bacilli</taxon>
        <taxon>Bacillales</taxon>
        <taxon>Staphylococcaceae</taxon>
        <taxon>Staphylococcus</taxon>
    </lineage>
</organism>
<reference key="1">
    <citation type="journal article" date="2001" name="Lancet">
        <title>Whole genome sequencing of meticillin-resistant Staphylococcus aureus.</title>
        <authorList>
            <person name="Kuroda M."/>
            <person name="Ohta T."/>
            <person name="Uchiyama I."/>
            <person name="Baba T."/>
            <person name="Yuzawa H."/>
            <person name="Kobayashi I."/>
            <person name="Cui L."/>
            <person name="Oguchi A."/>
            <person name="Aoki K."/>
            <person name="Nagai Y."/>
            <person name="Lian J.-Q."/>
            <person name="Ito T."/>
            <person name="Kanamori M."/>
            <person name="Matsumaru H."/>
            <person name="Maruyama A."/>
            <person name="Murakami H."/>
            <person name="Hosoyama A."/>
            <person name="Mizutani-Ui Y."/>
            <person name="Takahashi N.K."/>
            <person name="Sawano T."/>
            <person name="Inoue R."/>
            <person name="Kaito C."/>
            <person name="Sekimizu K."/>
            <person name="Hirakawa H."/>
            <person name="Kuhara S."/>
            <person name="Goto S."/>
            <person name="Yabuzaki J."/>
            <person name="Kanehisa M."/>
            <person name="Yamashita A."/>
            <person name="Oshima K."/>
            <person name="Furuya K."/>
            <person name="Yoshino C."/>
            <person name="Shiba T."/>
            <person name="Hattori M."/>
            <person name="Ogasawara N."/>
            <person name="Hayashi H."/>
            <person name="Hiramatsu K."/>
        </authorList>
    </citation>
    <scope>NUCLEOTIDE SEQUENCE [LARGE SCALE GENOMIC DNA]</scope>
    <source>
        <strain>N315</strain>
    </source>
</reference>